<accession>E2FZM4</accession>
<keyword id="KW-1185">Reference proteome</keyword>
<keyword id="KW-0732">Signal</keyword>
<name>SOCA_MYCTU</name>
<proteinExistence type="evidence at transcript level"/>
<organism>
    <name type="scientific">Mycobacterium tuberculosis (strain ATCC 25618 / H37Rv)</name>
    <dbReference type="NCBI Taxonomy" id="83332"/>
    <lineage>
        <taxon>Bacteria</taxon>
        <taxon>Bacillati</taxon>
        <taxon>Actinomycetota</taxon>
        <taxon>Actinomycetes</taxon>
        <taxon>Mycobacteriales</taxon>
        <taxon>Mycobacteriaceae</taxon>
        <taxon>Mycobacterium</taxon>
        <taxon>Mycobacterium tuberculosis complex</taxon>
    </lineage>
</organism>
<dbReference type="EMBL" id="HM222605">
    <property type="protein sequence ID" value="ADH04621.1"/>
    <property type="molecule type" value="Genomic_DNA"/>
</dbReference>
<dbReference type="EMBL" id="AL123456">
    <property type="status" value="NOT_ANNOTATED_CDS"/>
    <property type="molecule type" value="Genomic_DNA"/>
</dbReference>
<dbReference type="InParanoid" id="E2FZM4"/>
<dbReference type="PHI-base" id="PHI:4068"/>
<dbReference type="Proteomes" id="UP000001584">
    <property type="component" value="Chromosome"/>
</dbReference>
<reference key="1">
    <citation type="journal article" date="2011" name="Mol. Microbiol.">
        <title>A novel copper-responsive regulon in Mycobacterium tuberculosis.</title>
        <authorList>
            <person name="Festa R.A."/>
            <person name="Jones M.B."/>
            <person name="Butler-Wu S."/>
            <person name="Sinsimer D."/>
            <person name="Gerads R."/>
            <person name="Bishai W.R."/>
            <person name="Peterson S.N."/>
            <person name="Darwin K.H."/>
        </authorList>
    </citation>
    <scope>NUCLEOTIDE SEQUENCE [GENOMIC DNA]</scope>
    <scope>IDENTIFICATION</scope>
    <scope>INDUCTION</scope>
    <source>
        <strain>ATCC 25618 / H37Rv</strain>
    </source>
</reference>
<reference key="2">
    <citation type="journal article" date="1998" name="Nature">
        <title>Deciphering the biology of Mycobacterium tuberculosis from the complete genome sequence.</title>
        <authorList>
            <person name="Cole S.T."/>
            <person name="Brosch R."/>
            <person name="Parkhill J."/>
            <person name="Garnier T."/>
            <person name="Churcher C.M."/>
            <person name="Harris D.E."/>
            <person name="Gordon S.V."/>
            <person name="Eiglmeier K."/>
            <person name="Gas S."/>
            <person name="Barry C.E. III"/>
            <person name="Tekaia F."/>
            <person name="Badcock K."/>
            <person name="Basham D."/>
            <person name="Brown D."/>
            <person name="Chillingworth T."/>
            <person name="Connor R."/>
            <person name="Davies R.M."/>
            <person name="Devlin K."/>
            <person name="Feltwell T."/>
            <person name="Gentles S."/>
            <person name="Hamlin N."/>
            <person name="Holroyd S."/>
            <person name="Hornsby T."/>
            <person name="Jagels K."/>
            <person name="Krogh A."/>
            <person name="McLean J."/>
            <person name="Moule S."/>
            <person name="Murphy L.D."/>
            <person name="Oliver S."/>
            <person name="Osborne J."/>
            <person name="Quail M.A."/>
            <person name="Rajandream M.A."/>
            <person name="Rogers J."/>
            <person name="Rutter S."/>
            <person name="Seeger K."/>
            <person name="Skelton S."/>
            <person name="Squares S."/>
            <person name="Squares R."/>
            <person name="Sulston J.E."/>
            <person name="Taylor K."/>
            <person name="Whitehead S."/>
            <person name="Barrell B.G."/>
        </authorList>
    </citation>
    <scope>NUCLEOTIDE SEQUENCE [LARGE SCALE GENOMIC DNA]</scope>
    <source>
        <strain>ATCC 25618 / H37Rv</strain>
    </source>
</reference>
<reference key="3">
    <citation type="journal article" date="2014" name="MBio">
        <title>The copper-responsive RicR regulon contributes to Mycobacterium tuberculosis virulence.</title>
        <authorList>
            <person name="Shi X."/>
            <person name="Festa R.A."/>
            <person name="Ioerger T.R."/>
            <person name="Butler-Wu S."/>
            <person name="Sacchettini J.C."/>
            <person name="Darwin K.H."/>
            <person name="Samanovic M.I."/>
        </authorList>
    </citation>
    <scope>DISRUPTION PHENOTYPE</scope>
    <source>
        <strain>ATCC 25618 / H37Rv</strain>
    </source>
</reference>
<feature type="signal peptide" evidence="1">
    <location>
        <begin position="1"/>
        <end position="28"/>
    </location>
</feature>
<feature type="chain" id="PRO_0000433096" description="Uncharacterized protein SocA">
    <location>
        <begin position="29"/>
        <end position="61"/>
    </location>
</feature>
<evidence type="ECO:0000255" key="1"/>
<evidence type="ECO:0000269" key="2">
    <source>
    </source>
</evidence>
<evidence type="ECO:0000269" key="3">
    <source>
    </source>
</evidence>
<evidence type="ECO:0000303" key="4">
    <source>
    </source>
</evidence>
<evidence type="ECO:0000305" key="5"/>
<sequence>MHRRARRMPMRPRRSKRVRNRYTMGTFALHGLTHRLPSASLQTTAARHPDVTQFSMPGHYR</sequence>
<comment type="induction">
    <text evidence="2">Repressed by RicR. Induced by copper.</text>
</comment>
<comment type="disruption phenotype">
    <text evidence="3">Mutant shows wild-type copper resistance. Mutation does not attenuate growth in mice.</text>
</comment>
<gene>
    <name evidence="4" type="primary">socA</name>
    <name evidence="5" type="ordered locus">Rv1706c.1</name>
</gene>
<protein>
    <recommendedName>
        <fullName evidence="5">Uncharacterized protein SocA</fullName>
    </recommendedName>
    <alternativeName>
        <fullName evidence="4">Small ORF induced by copper A</fullName>
    </alternativeName>
</protein>